<comment type="function">
    <text>Could be required for the formation of a functional nitrogenase Fe protein. Probably accepts electrons from FixA/FixB and reduces a quinone.</text>
</comment>
<comment type="cofactor">
    <cofactor evidence="1">
        <name>FAD</name>
        <dbReference type="ChEBI" id="CHEBI:57692"/>
    </cofactor>
</comment>
<comment type="similarity">
    <text evidence="1">Belongs to the ETF-QO/FixC family.</text>
</comment>
<sequence>MTKEKFDAIVVGAGMSGNAAAYAMASRGLKVLQLERGEYPGSKNVQGAIMYANMLEAIIPDFRNDAPLERHLVEQRFWIMDDTSHTGMHYRSDDFNEVTPNRYTIIRAQFDKWLSRKVCEAGGTVLCETTATGLEWDSAGKAIGVRTDRAGDVVLADVVVLAEGVNGLLGTRAGLREMPKSKNVALAVKELHFLPEEVIAERFGLTGDEGCVIEAGGTISRGMAGLGFLYTNKESISLGIGCLISNFAETMERPYALLDAFKRHPSIQPLIAGSEVKEYAAHLIPEGGFNAIPRLCGNGWVVVGDAAQLNNAVHREGSNLAMASGRMAGEAISIIKSRGGVMDKASLSLYKTMLDKSFVVEDLSKQKDMPSLLHTNSPNFFTTYPQLISHAAQNFVRVDGTPKIEREIATTAAFLRARSRWGLVSDAVRLASAWR</sequence>
<gene>
    <name type="primary">fixC</name>
    <name type="ordered locus">RA0445</name>
    <name type="ORF">SMa0817</name>
</gene>
<proteinExistence type="inferred from homology"/>
<protein>
    <recommendedName>
        <fullName>Protein FixC</fullName>
    </recommendedName>
</protein>
<geneLocation type="plasmid">
    <name>pSymA</name>
    <name>megaplasmid 1</name>
</geneLocation>
<dbReference type="EMBL" id="M15546">
    <property type="protein sequence ID" value="AAA21770.1"/>
    <property type="molecule type" value="Genomic_DNA"/>
</dbReference>
<dbReference type="EMBL" id="AE006469">
    <property type="protein sequence ID" value="AAK65103.1"/>
    <property type="molecule type" value="Genomic_DNA"/>
</dbReference>
<dbReference type="PIR" id="C26952">
    <property type="entry name" value="C26952"/>
</dbReference>
<dbReference type="PIR" id="E95317">
    <property type="entry name" value="E95317"/>
</dbReference>
<dbReference type="RefSeq" id="NP_435691.1">
    <property type="nucleotide sequence ID" value="NC_003037.1"/>
</dbReference>
<dbReference type="RefSeq" id="WP_003532765.1">
    <property type="nucleotide sequence ID" value="NC_003037.1"/>
</dbReference>
<dbReference type="SMR" id="P09820"/>
<dbReference type="EnsemblBacteria" id="AAK65103">
    <property type="protein sequence ID" value="AAK65103"/>
    <property type="gene ID" value="SMa0817"/>
</dbReference>
<dbReference type="KEGG" id="sme:SMa0817"/>
<dbReference type="PATRIC" id="fig|266834.11.peg.458"/>
<dbReference type="HOGENOM" id="CLU_050977_0_0_5"/>
<dbReference type="OrthoDB" id="417034at2"/>
<dbReference type="PRO" id="PR:P09820"/>
<dbReference type="Proteomes" id="UP000001976">
    <property type="component" value="Plasmid pSymA"/>
</dbReference>
<dbReference type="GO" id="GO:0016491">
    <property type="term" value="F:oxidoreductase activity"/>
    <property type="evidence" value="ECO:0007669"/>
    <property type="project" value="UniProtKB-KW"/>
</dbReference>
<dbReference type="GO" id="GO:0009399">
    <property type="term" value="P:nitrogen fixation"/>
    <property type="evidence" value="ECO:0007669"/>
    <property type="project" value="UniProtKB-KW"/>
</dbReference>
<dbReference type="Gene3D" id="3.50.50.60">
    <property type="entry name" value="FAD/NAD(P)-binding domain"/>
    <property type="match status" value="1"/>
</dbReference>
<dbReference type="InterPro" id="IPR036188">
    <property type="entry name" value="FAD/NAD-bd_sf"/>
</dbReference>
<dbReference type="InterPro" id="IPR039651">
    <property type="entry name" value="FixC-like"/>
</dbReference>
<dbReference type="PANTHER" id="PTHR43624">
    <property type="entry name" value="ELECTRON TRANSFER FLAVOPROTEIN-QUINONE OXIDOREDUCTASE YDIS-RELATED"/>
    <property type="match status" value="1"/>
</dbReference>
<dbReference type="PANTHER" id="PTHR43624:SF2">
    <property type="entry name" value="ELECTRON TRANSFER FLAVOPROTEIN-QUINONE OXIDOREDUCTASE YDIS-RELATED"/>
    <property type="match status" value="1"/>
</dbReference>
<dbReference type="Pfam" id="PF12831">
    <property type="entry name" value="FAD_oxidored"/>
    <property type="match status" value="1"/>
</dbReference>
<dbReference type="SUPFAM" id="SSF54373">
    <property type="entry name" value="FAD-linked reductases, C-terminal domain"/>
    <property type="match status" value="1"/>
</dbReference>
<dbReference type="SUPFAM" id="SSF51905">
    <property type="entry name" value="FAD/NAD(P)-binding domain"/>
    <property type="match status" value="1"/>
</dbReference>
<keyword id="KW-0274">FAD</keyword>
<keyword id="KW-0285">Flavoprotein</keyword>
<keyword id="KW-0535">Nitrogen fixation</keyword>
<keyword id="KW-0560">Oxidoreductase</keyword>
<keyword id="KW-0614">Plasmid</keyword>
<keyword id="KW-1185">Reference proteome</keyword>
<evidence type="ECO:0000305" key="1"/>
<name>FIXC_RHIME</name>
<feature type="chain" id="PRO_0000200688" description="Protein FixC">
    <location>
        <begin position="1"/>
        <end position="435"/>
    </location>
</feature>
<reference key="1">
    <citation type="journal article" date="1987" name="J. Bacteriol.">
        <title>Genetic and structural analysis of the Rhizobium meliloti fixA, fixB, fixC, and fixX genes.</title>
        <authorList>
            <person name="Earl C.D."/>
            <person name="Ronson C.W."/>
            <person name="Ausubel F.M."/>
        </authorList>
    </citation>
    <scope>NUCLEOTIDE SEQUENCE [GENOMIC DNA]</scope>
    <source>
        <strain>1021</strain>
    </source>
</reference>
<reference key="2">
    <citation type="journal article" date="2001" name="Proc. Natl. Acad. Sci. U.S.A.">
        <title>Nucleotide sequence and predicted functions of the entire Sinorhizobium meliloti pSymA megaplasmid.</title>
        <authorList>
            <person name="Barnett M.J."/>
            <person name="Fisher R.F."/>
            <person name="Jones T."/>
            <person name="Komp C."/>
            <person name="Abola A.P."/>
            <person name="Barloy-Hubler F."/>
            <person name="Bowser L."/>
            <person name="Capela D."/>
            <person name="Galibert F."/>
            <person name="Gouzy J."/>
            <person name="Gurjal M."/>
            <person name="Hong A."/>
            <person name="Huizar L."/>
            <person name="Hyman R.W."/>
            <person name="Kahn D."/>
            <person name="Kahn M.L."/>
            <person name="Kalman S."/>
            <person name="Keating D.H."/>
            <person name="Palm C."/>
            <person name="Peck M.C."/>
            <person name="Surzycki R."/>
            <person name="Wells D.H."/>
            <person name="Yeh K.-C."/>
            <person name="Davis R.W."/>
            <person name="Federspiel N.A."/>
            <person name="Long S.R."/>
        </authorList>
    </citation>
    <scope>NUCLEOTIDE SEQUENCE [LARGE SCALE GENOMIC DNA]</scope>
    <source>
        <strain>1021</strain>
    </source>
</reference>
<reference key="3">
    <citation type="journal article" date="2001" name="Science">
        <title>The composite genome of the legume symbiont Sinorhizobium meliloti.</title>
        <authorList>
            <person name="Galibert F."/>
            <person name="Finan T.M."/>
            <person name="Long S.R."/>
            <person name="Puehler A."/>
            <person name="Abola P."/>
            <person name="Ampe F."/>
            <person name="Barloy-Hubler F."/>
            <person name="Barnett M.J."/>
            <person name="Becker A."/>
            <person name="Boistard P."/>
            <person name="Bothe G."/>
            <person name="Boutry M."/>
            <person name="Bowser L."/>
            <person name="Buhrmester J."/>
            <person name="Cadieu E."/>
            <person name="Capela D."/>
            <person name="Chain P."/>
            <person name="Cowie A."/>
            <person name="Davis R.W."/>
            <person name="Dreano S."/>
            <person name="Federspiel N.A."/>
            <person name="Fisher R.F."/>
            <person name="Gloux S."/>
            <person name="Godrie T."/>
            <person name="Goffeau A."/>
            <person name="Golding B."/>
            <person name="Gouzy J."/>
            <person name="Gurjal M."/>
            <person name="Hernandez-Lucas I."/>
            <person name="Hong A."/>
            <person name="Huizar L."/>
            <person name="Hyman R.W."/>
            <person name="Jones T."/>
            <person name="Kahn D."/>
            <person name="Kahn M.L."/>
            <person name="Kalman S."/>
            <person name="Keating D.H."/>
            <person name="Kiss E."/>
            <person name="Komp C."/>
            <person name="Lelaure V."/>
            <person name="Masuy D."/>
            <person name="Palm C."/>
            <person name="Peck M.C."/>
            <person name="Pohl T.M."/>
            <person name="Portetelle D."/>
            <person name="Purnelle B."/>
            <person name="Ramsperger U."/>
            <person name="Surzycki R."/>
            <person name="Thebault P."/>
            <person name="Vandenbol M."/>
            <person name="Vorhoelter F.J."/>
            <person name="Weidner S."/>
            <person name="Wells D.H."/>
            <person name="Wong K."/>
            <person name="Yeh K.-C."/>
            <person name="Batut J."/>
        </authorList>
    </citation>
    <scope>NUCLEOTIDE SEQUENCE [LARGE SCALE GENOMIC DNA]</scope>
    <source>
        <strain>1021</strain>
    </source>
</reference>
<accession>P09820</accession>
<organism>
    <name type="scientific">Rhizobium meliloti (strain 1021)</name>
    <name type="common">Ensifer meliloti</name>
    <name type="synonym">Sinorhizobium meliloti</name>
    <dbReference type="NCBI Taxonomy" id="266834"/>
    <lineage>
        <taxon>Bacteria</taxon>
        <taxon>Pseudomonadati</taxon>
        <taxon>Pseudomonadota</taxon>
        <taxon>Alphaproteobacteria</taxon>
        <taxon>Hyphomicrobiales</taxon>
        <taxon>Rhizobiaceae</taxon>
        <taxon>Sinorhizobium/Ensifer group</taxon>
        <taxon>Sinorhizobium</taxon>
    </lineage>
</organism>